<comment type="function">
    <text evidence="1">One of the primary rRNA binding proteins, it binds directly to 16S rRNA where it helps nucleate assembly of the platform of the 30S subunit by binding and bridging several RNA helices of the 16S rRNA.</text>
</comment>
<comment type="function">
    <text evidence="1">Forms an intersubunit bridge (bridge B4) with the 23S rRNA of the 50S subunit in the ribosome.</text>
</comment>
<comment type="subunit">
    <text evidence="1">Part of the 30S ribosomal subunit. Forms a bridge to the 50S subunit in the 70S ribosome, contacting the 23S rRNA.</text>
</comment>
<comment type="similarity">
    <text evidence="1">Belongs to the universal ribosomal protein uS15 family.</text>
</comment>
<accession>Q7MYY9</accession>
<protein>
    <recommendedName>
        <fullName evidence="1">Small ribosomal subunit protein uS15</fullName>
    </recommendedName>
    <alternativeName>
        <fullName evidence="2">30S ribosomal protein S15</fullName>
    </alternativeName>
</protein>
<evidence type="ECO:0000255" key="1">
    <source>
        <dbReference type="HAMAP-Rule" id="MF_01343"/>
    </source>
</evidence>
<evidence type="ECO:0000305" key="2"/>
<keyword id="KW-1185">Reference proteome</keyword>
<keyword id="KW-0687">Ribonucleoprotein</keyword>
<keyword id="KW-0689">Ribosomal protein</keyword>
<keyword id="KW-0694">RNA-binding</keyword>
<keyword id="KW-0699">rRNA-binding</keyword>
<feature type="chain" id="PRO_0000115502" description="Small ribosomal subunit protein uS15">
    <location>
        <begin position="1"/>
        <end position="89"/>
    </location>
</feature>
<name>RS15_PHOLL</name>
<organism>
    <name type="scientific">Photorhabdus laumondii subsp. laumondii (strain DSM 15139 / CIP 105565 / TT01)</name>
    <name type="common">Photorhabdus luminescens subsp. laumondii</name>
    <dbReference type="NCBI Taxonomy" id="243265"/>
    <lineage>
        <taxon>Bacteria</taxon>
        <taxon>Pseudomonadati</taxon>
        <taxon>Pseudomonadota</taxon>
        <taxon>Gammaproteobacteria</taxon>
        <taxon>Enterobacterales</taxon>
        <taxon>Morganellaceae</taxon>
        <taxon>Photorhabdus</taxon>
    </lineage>
</organism>
<sequence>MSLSTEAKAQIIAEFGRDVNDSGSSEVQIALLTAQINHLQGHFSEHKKDHHSRRGLLRMVSQRRKLLDYLKRKNVTSYTALIGRLGLRR</sequence>
<reference key="1">
    <citation type="journal article" date="2003" name="Nat. Biotechnol.">
        <title>The genome sequence of the entomopathogenic bacterium Photorhabdus luminescens.</title>
        <authorList>
            <person name="Duchaud E."/>
            <person name="Rusniok C."/>
            <person name="Frangeul L."/>
            <person name="Buchrieser C."/>
            <person name="Givaudan A."/>
            <person name="Taourit S."/>
            <person name="Bocs S."/>
            <person name="Boursaux-Eude C."/>
            <person name="Chandler M."/>
            <person name="Charles J.-F."/>
            <person name="Dassa E."/>
            <person name="Derose R."/>
            <person name="Derzelle S."/>
            <person name="Freyssinet G."/>
            <person name="Gaudriault S."/>
            <person name="Medigue C."/>
            <person name="Lanois A."/>
            <person name="Powell K."/>
            <person name="Siguier P."/>
            <person name="Vincent R."/>
            <person name="Wingate V."/>
            <person name="Zouine M."/>
            <person name="Glaser P."/>
            <person name="Boemare N."/>
            <person name="Danchin A."/>
            <person name="Kunst F."/>
        </authorList>
    </citation>
    <scope>NUCLEOTIDE SEQUENCE [LARGE SCALE GENOMIC DNA]</scope>
    <source>
        <strain>DSM 15139 / CIP 105565 / TT01</strain>
    </source>
</reference>
<dbReference type="EMBL" id="BX571874">
    <property type="protein sequence ID" value="CAE16898.1"/>
    <property type="molecule type" value="Genomic_DNA"/>
</dbReference>
<dbReference type="RefSeq" id="WP_011148602.1">
    <property type="nucleotide sequence ID" value="NC_005126.1"/>
</dbReference>
<dbReference type="SMR" id="Q7MYY9"/>
<dbReference type="STRING" id="243265.plu4526"/>
<dbReference type="GeneID" id="48850735"/>
<dbReference type="KEGG" id="plu:plu4526"/>
<dbReference type="eggNOG" id="COG0184">
    <property type="taxonomic scope" value="Bacteria"/>
</dbReference>
<dbReference type="HOGENOM" id="CLU_148518_0_0_6"/>
<dbReference type="OrthoDB" id="9799262at2"/>
<dbReference type="Proteomes" id="UP000002514">
    <property type="component" value="Chromosome"/>
</dbReference>
<dbReference type="GO" id="GO:0022627">
    <property type="term" value="C:cytosolic small ribosomal subunit"/>
    <property type="evidence" value="ECO:0007669"/>
    <property type="project" value="TreeGrafter"/>
</dbReference>
<dbReference type="GO" id="GO:0019843">
    <property type="term" value="F:rRNA binding"/>
    <property type="evidence" value="ECO:0007669"/>
    <property type="project" value="UniProtKB-UniRule"/>
</dbReference>
<dbReference type="GO" id="GO:0003735">
    <property type="term" value="F:structural constituent of ribosome"/>
    <property type="evidence" value="ECO:0007669"/>
    <property type="project" value="InterPro"/>
</dbReference>
<dbReference type="GO" id="GO:0006412">
    <property type="term" value="P:translation"/>
    <property type="evidence" value="ECO:0007669"/>
    <property type="project" value="UniProtKB-UniRule"/>
</dbReference>
<dbReference type="CDD" id="cd00353">
    <property type="entry name" value="Ribosomal_S15p_S13e"/>
    <property type="match status" value="1"/>
</dbReference>
<dbReference type="FunFam" id="1.10.287.10:FF:000002">
    <property type="entry name" value="30S ribosomal protein S15"/>
    <property type="match status" value="1"/>
</dbReference>
<dbReference type="Gene3D" id="6.10.250.3130">
    <property type="match status" value="1"/>
</dbReference>
<dbReference type="Gene3D" id="1.10.287.10">
    <property type="entry name" value="S15/NS1, RNA-binding"/>
    <property type="match status" value="1"/>
</dbReference>
<dbReference type="HAMAP" id="MF_01343_B">
    <property type="entry name" value="Ribosomal_uS15_B"/>
    <property type="match status" value="1"/>
</dbReference>
<dbReference type="InterPro" id="IPR000589">
    <property type="entry name" value="Ribosomal_uS15"/>
</dbReference>
<dbReference type="InterPro" id="IPR005290">
    <property type="entry name" value="Ribosomal_uS15_bac-type"/>
</dbReference>
<dbReference type="InterPro" id="IPR009068">
    <property type="entry name" value="uS15_NS1_RNA-bd_sf"/>
</dbReference>
<dbReference type="NCBIfam" id="TIGR00952">
    <property type="entry name" value="S15_bact"/>
    <property type="match status" value="1"/>
</dbReference>
<dbReference type="PANTHER" id="PTHR23321">
    <property type="entry name" value="RIBOSOMAL PROTEIN S15, BACTERIAL AND ORGANELLAR"/>
    <property type="match status" value="1"/>
</dbReference>
<dbReference type="PANTHER" id="PTHR23321:SF26">
    <property type="entry name" value="SMALL RIBOSOMAL SUBUNIT PROTEIN US15M"/>
    <property type="match status" value="1"/>
</dbReference>
<dbReference type="Pfam" id="PF00312">
    <property type="entry name" value="Ribosomal_S15"/>
    <property type="match status" value="1"/>
</dbReference>
<dbReference type="SMART" id="SM01387">
    <property type="entry name" value="Ribosomal_S15"/>
    <property type="match status" value="1"/>
</dbReference>
<dbReference type="SUPFAM" id="SSF47060">
    <property type="entry name" value="S15/NS1 RNA-binding domain"/>
    <property type="match status" value="1"/>
</dbReference>
<dbReference type="PROSITE" id="PS00362">
    <property type="entry name" value="RIBOSOMAL_S15"/>
    <property type="match status" value="1"/>
</dbReference>
<proteinExistence type="inferred from homology"/>
<gene>
    <name evidence="1" type="primary">rpsO</name>
    <name type="ordered locus">plu4526</name>
</gene>